<keyword id="KW-1185">Reference proteome</keyword>
<keyword id="KW-0687">Ribonucleoprotein</keyword>
<keyword id="KW-0689">Ribosomal protein</keyword>
<organism>
    <name type="scientific">Mycoplasma mycoides subsp. mycoides SC (strain CCUG 32753 / NCTC 10114 / PG1)</name>
    <dbReference type="NCBI Taxonomy" id="272632"/>
    <lineage>
        <taxon>Bacteria</taxon>
        <taxon>Bacillati</taxon>
        <taxon>Mycoplasmatota</taxon>
        <taxon>Mollicutes</taxon>
        <taxon>Mycoplasmataceae</taxon>
        <taxon>Mycoplasma</taxon>
    </lineage>
</organism>
<accession>Q6MT20</accession>
<proteinExistence type="inferred from homology"/>
<reference key="1">
    <citation type="journal article" date="2004" name="Genome Res.">
        <title>The genome sequence of Mycoplasma mycoides subsp. mycoides SC type strain PG1T, the causative agent of contagious bovine pleuropneumonia (CBPP).</title>
        <authorList>
            <person name="Westberg J."/>
            <person name="Persson A."/>
            <person name="Holmberg A."/>
            <person name="Goesmann A."/>
            <person name="Lundeberg J."/>
            <person name="Johansson K.-E."/>
            <person name="Pettersson B."/>
            <person name="Uhlen M."/>
        </authorList>
    </citation>
    <scope>NUCLEOTIDE SEQUENCE [LARGE SCALE GENOMIC DNA]</scope>
    <source>
        <strain>CCUG 32753 / NCTC 10114 / PG1</strain>
    </source>
</reference>
<gene>
    <name evidence="1" type="primary">rpmF</name>
    <name type="ordered locus">MSC_0593</name>
</gene>
<comment type="similarity">
    <text evidence="1">Belongs to the bacterial ribosomal protein bL32 family.</text>
</comment>
<sequence>MAVPFRKTSKSAKNKRRSHLALSAASLVSCTNCGAMIKPHHVCKECGFYKNKEVKVVEA</sequence>
<feature type="chain" id="PRO_0000172367" description="Large ribosomal subunit protein bL32">
    <location>
        <begin position="1"/>
        <end position="59"/>
    </location>
</feature>
<name>RL32_MYCMS</name>
<dbReference type="EMBL" id="BX293980">
    <property type="protein sequence ID" value="CAE77216.1"/>
    <property type="molecule type" value="Genomic_DNA"/>
</dbReference>
<dbReference type="RefSeq" id="NP_975574.1">
    <property type="nucleotide sequence ID" value="NC_005364.2"/>
</dbReference>
<dbReference type="RefSeq" id="WP_008362864.1">
    <property type="nucleotide sequence ID" value="NC_005364.2"/>
</dbReference>
<dbReference type="SMR" id="Q6MT20"/>
<dbReference type="STRING" id="272632.MSC_0593"/>
<dbReference type="GeneID" id="90597933"/>
<dbReference type="KEGG" id="mmy:MSC_0593"/>
<dbReference type="PATRIC" id="fig|272632.4.peg.638"/>
<dbReference type="eggNOG" id="COG0333">
    <property type="taxonomic scope" value="Bacteria"/>
</dbReference>
<dbReference type="HOGENOM" id="CLU_129084_1_3_14"/>
<dbReference type="PRO" id="PR:Q6MT20"/>
<dbReference type="Proteomes" id="UP000001016">
    <property type="component" value="Chromosome"/>
</dbReference>
<dbReference type="GO" id="GO:0015934">
    <property type="term" value="C:large ribosomal subunit"/>
    <property type="evidence" value="ECO:0007669"/>
    <property type="project" value="InterPro"/>
</dbReference>
<dbReference type="GO" id="GO:0003735">
    <property type="term" value="F:structural constituent of ribosome"/>
    <property type="evidence" value="ECO:0007669"/>
    <property type="project" value="InterPro"/>
</dbReference>
<dbReference type="GO" id="GO:0006412">
    <property type="term" value="P:translation"/>
    <property type="evidence" value="ECO:0007669"/>
    <property type="project" value="UniProtKB-UniRule"/>
</dbReference>
<dbReference type="Gene3D" id="1.20.5.640">
    <property type="entry name" value="Single helix bin"/>
    <property type="match status" value="1"/>
</dbReference>
<dbReference type="HAMAP" id="MF_00340">
    <property type="entry name" value="Ribosomal_bL32"/>
    <property type="match status" value="1"/>
</dbReference>
<dbReference type="InterPro" id="IPR002677">
    <property type="entry name" value="Ribosomal_bL32"/>
</dbReference>
<dbReference type="InterPro" id="IPR044957">
    <property type="entry name" value="Ribosomal_bL32_bact"/>
</dbReference>
<dbReference type="InterPro" id="IPR011332">
    <property type="entry name" value="Ribosomal_zn-bd"/>
</dbReference>
<dbReference type="NCBIfam" id="TIGR01031">
    <property type="entry name" value="rpmF_bact"/>
    <property type="match status" value="1"/>
</dbReference>
<dbReference type="PANTHER" id="PTHR35534">
    <property type="entry name" value="50S RIBOSOMAL PROTEIN L32"/>
    <property type="match status" value="1"/>
</dbReference>
<dbReference type="PANTHER" id="PTHR35534:SF2">
    <property type="entry name" value="LARGE RIBOSOMAL SUBUNIT PROTEIN BL32"/>
    <property type="match status" value="1"/>
</dbReference>
<dbReference type="Pfam" id="PF01783">
    <property type="entry name" value="Ribosomal_L32p"/>
    <property type="match status" value="1"/>
</dbReference>
<dbReference type="SUPFAM" id="SSF57829">
    <property type="entry name" value="Zn-binding ribosomal proteins"/>
    <property type="match status" value="1"/>
</dbReference>
<evidence type="ECO:0000255" key="1">
    <source>
        <dbReference type="HAMAP-Rule" id="MF_00340"/>
    </source>
</evidence>
<evidence type="ECO:0000305" key="2"/>
<protein>
    <recommendedName>
        <fullName evidence="1">Large ribosomal subunit protein bL32</fullName>
    </recommendedName>
    <alternativeName>
        <fullName evidence="2">50S ribosomal protein L32</fullName>
    </alternativeName>
</protein>